<evidence type="ECO:0000255" key="1">
    <source>
        <dbReference type="HAMAP-Rule" id="MF_00639"/>
    </source>
</evidence>
<gene>
    <name evidence="1" type="primary">murD</name>
    <name type="ordered locus">Csal_2192</name>
</gene>
<dbReference type="EC" id="6.3.2.9" evidence="1"/>
<dbReference type="EMBL" id="CP000285">
    <property type="protein sequence ID" value="ABE59543.1"/>
    <property type="molecule type" value="Genomic_DNA"/>
</dbReference>
<dbReference type="RefSeq" id="WP_011507489.1">
    <property type="nucleotide sequence ID" value="NC_007963.1"/>
</dbReference>
<dbReference type="SMR" id="Q1QVG5"/>
<dbReference type="STRING" id="290398.Csal_2192"/>
<dbReference type="GeneID" id="95334910"/>
<dbReference type="KEGG" id="csa:Csal_2192"/>
<dbReference type="eggNOG" id="COG0771">
    <property type="taxonomic scope" value="Bacteria"/>
</dbReference>
<dbReference type="HOGENOM" id="CLU_032540_1_0_6"/>
<dbReference type="OrthoDB" id="9809796at2"/>
<dbReference type="UniPathway" id="UPA00219"/>
<dbReference type="Proteomes" id="UP000000239">
    <property type="component" value="Chromosome"/>
</dbReference>
<dbReference type="GO" id="GO:0005737">
    <property type="term" value="C:cytoplasm"/>
    <property type="evidence" value="ECO:0007669"/>
    <property type="project" value="UniProtKB-SubCell"/>
</dbReference>
<dbReference type="GO" id="GO:0005524">
    <property type="term" value="F:ATP binding"/>
    <property type="evidence" value="ECO:0007669"/>
    <property type="project" value="UniProtKB-UniRule"/>
</dbReference>
<dbReference type="GO" id="GO:0008764">
    <property type="term" value="F:UDP-N-acetylmuramoylalanine-D-glutamate ligase activity"/>
    <property type="evidence" value="ECO:0007669"/>
    <property type="project" value="UniProtKB-UniRule"/>
</dbReference>
<dbReference type="GO" id="GO:0051301">
    <property type="term" value="P:cell division"/>
    <property type="evidence" value="ECO:0007669"/>
    <property type="project" value="UniProtKB-KW"/>
</dbReference>
<dbReference type="GO" id="GO:0071555">
    <property type="term" value="P:cell wall organization"/>
    <property type="evidence" value="ECO:0007669"/>
    <property type="project" value="UniProtKB-KW"/>
</dbReference>
<dbReference type="GO" id="GO:0009252">
    <property type="term" value="P:peptidoglycan biosynthetic process"/>
    <property type="evidence" value="ECO:0007669"/>
    <property type="project" value="UniProtKB-UniRule"/>
</dbReference>
<dbReference type="GO" id="GO:0008360">
    <property type="term" value="P:regulation of cell shape"/>
    <property type="evidence" value="ECO:0007669"/>
    <property type="project" value="UniProtKB-KW"/>
</dbReference>
<dbReference type="Gene3D" id="3.90.190.20">
    <property type="entry name" value="Mur ligase, C-terminal domain"/>
    <property type="match status" value="1"/>
</dbReference>
<dbReference type="Gene3D" id="3.40.1190.10">
    <property type="entry name" value="Mur-like, catalytic domain"/>
    <property type="match status" value="1"/>
</dbReference>
<dbReference type="Gene3D" id="3.40.50.720">
    <property type="entry name" value="NAD(P)-binding Rossmann-like Domain"/>
    <property type="match status" value="1"/>
</dbReference>
<dbReference type="HAMAP" id="MF_00639">
    <property type="entry name" value="MurD"/>
    <property type="match status" value="1"/>
</dbReference>
<dbReference type="InterPro" id="IPR036565">
    <property type="entry name" value="Mur-like_cat_sf"/>
</dbReference>
<dbReference type="InterPro" id="IPR004101">
    <property type="entry name" value="Mur_ligase_C"/>
</dbReference>
<dbReference type="InterPro" id="IPR036615">
    <property type="entry name" value="Mur_ligase_C_dom_sf"/>
</dbReference>
<dbReference type="InterPro" id="IPR013221">
    <property type="entry name" value="Mur_ligase_cen"/>
</dbReference>
<dbReference type="InterPro" id="IPR005762">
    <property type="entry name" value="MurD"/>
</dbReference>
<dbReference type="NCBIfam" id="TIGR01087">
    <property type="entry name" value="murD"/>
    <property type="match status" value="1"/>
</dbReference>
<dbReference type="PANTHER" id="PTHR43692">
    <property type="entry name" value="UDP-N-ACETYLMURAMOYLALANINE--D-GLUTAMATE LIGASE"/>
    <property type="match status" value="1"/>
</dbReference>
<dbReference type="PANTHER" id="PTHR43692:SF1">
    <property type="entry name" value="UDP-N-ACETYLMURAMOYLALANINE--D-GLUTAMATE LIGASE"/>
    <property type="match status" value="1"/>
</dbReference>
<dbReference type="Pfam" id="PF02875">
    <property type="entry name" value="Mur_ligase_C"/>
    <property type="match status" value="1"/>
</dbReference>
<dbReference type="Pfam" id="PF08245">
    <property type="entry name" value="Mur_ligase_M"/>
    <property type="match status" value="1"/>
</dbReference>
<dbReference type="Pfam" id="PF21799">
    <property type="entry name" value="MurD-like_N"/>
    <property type="match status" value="1"/>
</dbReference>
<dbReference type="SUPFAM" id="SSF51984">
    <property type="entry name" value="MurCD N-terminal domain"/>
    <property type="match status" value="1"/>
</dbReference>
<dbReference type="SUPFAM" id="SSF53623">
    <property type="entry name" value="MurD-like peptide ligases, catalytic domain"/>
    <property type="match status" value="1"/>
</dbReference>
<dbReference type="SUPFAM" id="SSF53244">
    <property type="entry name" value="MurD-like peptide ligases, peptide-binding domain"/>
    <property type="match status" value="1"/>
</dbReference>
<protein>
    <recommendedName>
        <fullName evidence="1">UDP-N-acetylmuramoylalanine--D-glutamate ligase</fullName>
        <ecNumber evidence="1">6.3.2.9</ecNumber>
    </recommendedName>
    <alternativeName>
        <fullName evidence="1">D-glutamic acid-adding enzyme</fullName>
    </alternativeName>
    <alternativeName>
        <fullName evidence="1">UDP-N-acetylmuramoyl-L-alanyl-D-glutamate synthetase</fullName>
    </alternativeName>
</protein>
<organism>
    <name type="scientific">Chromohalobacter salexigens (strain ATCC BAA-138 / DSM 3043 / CIP 106854 / NCIMB 13768 / 1H11)</name>
    <dbReference type="NCBI Taxonomy" id="290398"/>
    <lineage>
        <taxon>Bacteria</taxon>
        <taxon>Pseudomonadati</taxon>
        <taxon>Pseudomonadota</taxon>
        <taxon>Gammaproteobacteria</taxon>
        <taxon>Oceanospirillales</taxon>
        <taxon>Halomonadaceae</taxon>
        <taxon>Chromohalobacter</taxon>
    </lineage>
</organism>
<feature type="chain" id="PRO_0000257179" description="UDP-N-acetylmuramoylalanine--D-glutamate ligase">
    <location>
        <begin position="1"/>
        <end position="455"/>
    </location>
</feature>
<feature type="binding site" evidence="1">
    <location>
        <begin position="118"/>
        <end position="124"/>
    </location>
    <ligand>
        <name>ATP</name>
        <dbReference type="ChEBI" id="CHEBI:30616"/>
    </ligand>
</feature>
<reference key="1">
    <citation type="journal article" date="2011" name="Stand. Genomic Sci.">
        <title>Complete genome sequence of the halophilic and highly halotolerant Chromohalobacter salexigens type strain (1H11(T)).</title>
        <authorList>
            <person name="Copeland A."/>
            <person name="O'Connor K."/>
            <person name="Lucas S."/>
            <person name="Lapidus A."/>
            <person name="Berry K.W."/>
            <person name="Detter J.C."/>
            <person name="Del Rio T.G."/>
            <person name="Hammon N."/>
            <person name="Dalin E."/>
            <person name="Tice H."/>
            <person name="Pitluck S."/>
            <person name="Bruce D."/>
            <person name="Goodwin L."/>
            <person name="Han C."/>
            <person name="Tapia R."/>
            <person name="Saunders E."/>
            <person name="Schmutz J."/>
            <person name="Brettin T."/>
            <person name="Larimer F."/>
            <person name="Land M."/>
            <person name="Hauser L."/>
            <person name="Vargas C."/>
            <person name="Nieto J.J."/>
            <person name="Kyrpides N.C."/>
            <person name="Ivanova N."/>
            <person name="Goker M."/>
            <person name="Klenk H.P."/>
            <person name="Csonka L.N."/>
            <person name="Woyke T."/>
        </authorList>
    </citation>
    <scope>NUCLEOTIDE SEQUENCE [LARGE SCALE GENOMIC DNA]</scope>
    <source>
        <strain>ATCC BAA-138 / DSM 3043 / CIP 106854 / NCIMB 13768 / 1H11</strain>
    </source>
</reference>
<name>MURD_CHRSD</name>
<accession>Q1QVG5</accession>
<comment type="function">
    <text evidence="1">Cell wall formation. Catalyzes the addition of glutamate to the nucleotide precursor UDP-N-acetylmuramoyl-L-alanine (UMA).</text>
</comment>
<comment type="catalytic activity">
    <reaction evidence="1">
        <text>UDP-N-acetyl-alpha-D-muramoyl-L-alanine + D-glutamate + ATP = UDP-N-acetyl-alpha-D-muramoyl-L-alanyl-D-glutamate + ADP + phosphate + H(+)</text>
        <dbReference type="Rhea" id="RHEA:16429"/>
        <dbReference type="ChEBI" id="CHEBI:15378"/>
        <dbReference type="ChEBI" id="CHEBI:29986"/>
        <dbReference type="ChEBI" id="CHEBI:30616"/>
        <dbReference type="ChEBI" id="CHEBI:43474"/>
        <dbReference type="ChEBI" id="CHEBI:83898"/>
        <dbReference type="ChEBI" id="CHEBI:83900"/>
        <dbReference type="ChEBI" id="CHEBI:456216"/>
        <dbReference type="EC" id="6.3.2.9"/>
    </reaction>
</comment>
<comment type="pathway">
    <text evidence="1">Cell wall biogenesis; peptidoglycan biosynthesis.</text>
</comment>
<comment type="subcellular location">
    <subcellularLocation>
        <location evidence="1">Cytoplasm</location>
    </subcellularLocation>
</comment>
<comment type="similarity">
    <text evidence="1">Belongs to the MurCDEF family.</text>
</comment>
<sequence length="455" mass="48490">MPRVPAAHTLVIGLGVSGQAIARHLSRRGEPFMVADTRESPAGLEAFRAAHPGVDVVCGPLEALDMQEAREIVLSPGVDPRTPGLIDYVDHPGSGPEVVGEMALFVRECRSPIAAITGSNAKSTVTTLLGEMARESGWKTAVGGNLGTPALDLLDESPDAELFVLELSSFQLETTPWLGADTAAFLNLSEDHLDRHGDMQGYRAAKQRIFRGARHAVVNAEDPATWPDAPSCAVTRFTTDMPESGEWGIVDHDGERWLAQGRAAIMPVGQVRMPGRHNHANALAALAMGAHLGLSREAMCRVLERFPGLPHRGEFIVEREGVRWINDSKGTNVGATLAAIAGIGSDLEGRLILLAGGDGKGADFSPLAEPLAHHAREAIVFGRDAERLEQALSARLPVTRVADLAAAMQRARTIARAGDTVLLSPACASLDQFPNYMARGEAFRQWLATDGEAAC</sequence>
<keyword id="KW-0067">ATP-binding</keyword>
<keyword id="KW-0131">Cell cycle</keyword>
<keyword id="KW-0132">Cell division</keyword>
<keyword id="KW-0133">Cell shape</keyword>
<keyword id="KW-0961">Cell wall biogenesis/degradation</keyword>
<keyword id="KW-0963">Cytoplasm</keyword>
<keyword id="KW-0436">Ligase</keyword>
<keyword id="KW-0547">Nucleotide-binding</keyword>
<keyword id="KW-0573">Peptidoglycan synthesis</keyword>
<keyword id="KW-1185">Reference proteome</keyword>
<proteinExistence type="inferred from homology"/>